<sequence>MKIRKSILAGTLAIVLASPLVTNLDKNEAQASTSLPTSNEYQNEKLANELKSLLDELNVNELATGSLNTYYKRTIKISGQKAMYALKSKDFKKMSEAKYQLQKIYNEIDEALKSKY</sequence>
<protein>
    <recommendedName>
        <fullName>Staphylococcal complement inhibitor</fullName>
        <shortName>SCIN</shortName>
    </recommendedName>
</protein>
<comment type="function">
    <text evidence="1">Involved in countering the first line of host defense mechanisms. Efficiently inhibits opsonization, phagocytosis and killing of S.aureus by human neutrophils. Acts by binding and stabilizing human C3 convertases (C4b2a and C3bBb), leading to their inactivation. The convertases are no longer able to cleave complement C3, therefore preventing further C3b deposition on the bacterial surface and phagocytosis of the bacterium. Also prevents C5a-induced neutrophil responses (By similarity).</text>
</comment>
<comment type="subcellular location">
    <subcellularLocation>
        <location evidence="1">Secreted</location>
    </subcellularLocation>
</comment>
<comment type="similarity">
    <text evidence="3">Belongs to the SCIN family.</text>
</comment>
<dbReference type="EMBL" id="CP000255">
    <property type="protein sequence ID" value="ABD22701.1"/>
    <property type="molecule type" value="Genomic_DNA"/>
</dbReference>
<dbReference type="RefSeq" id="WP_000702263.1">
    <property type="nucleotide sequence ID" value="NZ_CP027476.1"/>
</dbReference>
<dbReference type="BMRB" id="Q2FFF8"/>
<dbReference type="SMR" id="Q2FFF8"/>
<dbReference type="KEGG" id="saa:SAUSA300_1919"/>
<dbReference type="HOGENOM" id="CLU_166895_0_0_9"/>
<dbReference type="OMA" id="LARTMYP"/>
<dbReference type="PRO" id="PR:Q2FFF8"/>
<dbReference type="Proteomes" id="UP000001939">
    <property type="component" value="Chromosome"/>
</dbReference>
<dbReference type="GO" id="GO:0005576">
    <property type="term" value="C:extracellular region"/>
    <property type="evidence" value="ECO:0007669"/>
    <property type="project" value="UniProtKB-SubCell"/>
</dbReference>
<dbReference type="Gene3D" id="1.20.1270.10">
    <property type="match status" value="1"/>
</dbReference>
<dbReference type="InterPro" id="IPR029048">
    <property type="entry name" value="HSP70_C_sf"/>
</dbReference>
<dbReference type="InterPro" id="IPR021612">
    <property type="entry name" value="SCIN"/>
</dbReference>
<dbReference type="Pfam" id="PF11546">
    <property type="entry name" value="CompInhib_SCIN"/>
    <property type="match status" value="1"/>
</dbReference>
<proteinExistence type="inferred from homology"/>
<feature type="signal peptide" evidence="2">
    <location>
        <begin position="1"/>
        <end position="31"/>
    </location>
</feature>
<feature type="chain" id="PRO_0000319876" description="Staphylococcal complement inhibitor">
    <location>
        <begin position="32"/>
        <end position="116"/>
    </location>
</feature>
<feature type="region of interest" description="Essential for activity" evidence="1">
    <location>
        <begin position="62"/>
        <end position="79"/>
    </location>
</feature>
<accession>Q2FFF8</accession>
<reference key="1">
    <citation type="journal article" date="2006" name="Lancet">
        <title>Complete genome sequence of USA300, an epidemic clone of community-acquired meticillin-resistant Staphylococcus aureus.</title>
        <authorList>
            <person name="Diep B.A."/>
            <person name="Gill S.R."/>
            <person name="Chang R.F."/>
            <person name="Phan T.H."/>
            <person name="Chen J.H."/>
            <person name="Davidson M.G."/>
            <person name="Lin F."/>
            <person name="Lin J."/>
            <person name="Carleton H.A."/>
            <person name="Mongodin E.F."/>
            <person name="Sensabaugh G.F."/>
            <person name="Perdreau-Remington F."/>
        </authorList>
    </citation>
    <scope>NUCLEOTIDE SEQUENCE [LARGE SCALE GENOMIC DNA]</scope>
    <source>
        <strain>USA300</strain>
    </source>
</reference>
<evidence type="ECO:0000250" key="1"/>
<evidence type="ECO:0000255" key="2"/>
<evidence type="ECO:0000305" key="3"/>
<gene>
    <name type="primary">scn</name>
    <name type="ordered locus">SAUSA300_1919</name>
</gene>
<keyword id="KW-0964">Secreted</keyword>
<keyword id="KW-0732">Signal</keyword>
<keyword id="KW-0843">Virulence</keyword>
<organism>
    <name type="scientific">Staphylococcus aureus (strain USA300)</name>
    <dbReference type="NCBI Taxonomy" id="367830"/>
    <lineage>
        <taxon>Bacteria</taxon>
        <taxon>Bacillati</taxon>
        <taxon>Bacillota</taxon>
        <taxon>Bacilli</taxon>
        <taxon>Bacillales</taxon>
        <taxon>Staphylococcaceae</taxon>
        <taxon>Staphylococcus</taxon>
    </lineage>
</organism>
<name>SCIN_STAA3</name>